<name>DHPS_STAAM</name>
<dbReference type="EC" id="2.5.1.15"/>
<dbReference type="EMBL" id="BA000017">
    <property type="protein sequence ID" value="BAB56676.1"/>
    <property type="molecule type" value="Genomic_DNA"/>
</dbReference>
<dbReference type="RefSeq" id="WP_000167944.1">
    <property type="nucleotide sequence ID" value="NC_002758.2"/>
</dbReference>
<dbReference type="PDB" id="4HB7">
    <property type="method" value="X-ray"/>
    <property type="resolution" value="1.95 A"/>
    <property type="chains" value="A/B=1-267"/>
</dbReference>
<dbReference type="PDBsum" id="4HB7"/>
<dbReference type="SMR" id="P64141"/>
<dbReference type="KEGG" id="sav:SAV0514"/>
<dbReference type="HOGENOM" id="CLU_008023_0_2_9"/>
<dbReference type="PhylomeDB" id="P64141"/>
<dbReference type="UniPathway" id="UPA00077">
    <property type="reaction ID" value="UER00156"/>
</dbReference>
<dbReference type="EvolutionaryTrace" id="P64141"/>
<dbReference type="Proteomes" id="UP000002481">
    <property type="component" value="Chromosome"/>
</dbReference>
<dbReference type="GO" id="GO:0005829">
    <property type="term" value="C:cytosol"/>
    <property type="evidence" value="ECO:0007669"/>
    <property type="project" value="TreeGrafter"/>
</dbReference>
<dbReference type="GO" id="GO:0004156">
    <property type="term" value="F:dihydropteroate synthase activity"/>
    <property type="evidence" value="ECO:0007669"/>
    <property type="project" value="UniProtKB-EC"/>
</dbReference>
<dbReference type="GO" id="GO:0046872">
    <property type="term" value="F:metal ion binding"/>
    <property type="evidence" value="ECO:0007669"/>
    <property type="project" value="UniProtKB-KW"/>
</dbReference>
<dbReference type="GO" id="GO:0046656">
    <property type="term" value="P:folic acid biosynthetic process"/>
    <property type="evidence" value="ECO:0007669"/>
    <property type="project" value="UniProtKB-KW"/>
</dbReference>
<dbReference type="GO" id="GO:0046654">
    <property type="term" value="P:tetrahydrofolate biosynthetic process"/>
    <property type="evidence" value="ECO:0007669"/>
    <property type="project" value="UniProtKB-UniPathway"/>
</dbReference>
<dbReference type="CDD" id="cd00739">
    <property type="entry name" value="DHPS"/>
    <property type="match status" value="1"/>
</dbReference>
<dbReference type="FunFam" id="3.20.20.20:FF:000010">
    <property type="entry name" value="Dihydropteroate synthase"/>
    <property type="match status" value="1"/>
</dbReference>
<dbReference type="Gene3D" id="3.20.20.20">
    <property type="entry name" value="Dihydropteroate synthase-like"/>
    <property type="match status" value="1"/>
</dbReference>
<dbReference type="InterPro" id="IPR045031">
    <property type="entry name" value="DHP_synth-like"/>
</dbReference>
<dbReference type="InterPro" id="IPR006390">
    <property type="entry name" value="DHP_synth_dom"/>
</dbReference>
<dbReference type="InterPro" id="IPR011005">
    <property type="entry name" value="Dihydropteroate_synth-like_sf"/>
</dbReference>
<dbReference type="InterPro" id="IPR000489">
    <property type="entry name" value="Pterin-binding_dom"/>
</dbReference>
<dbReference type="NCBIfam" id="TIGR01496">
    <property type="entry name" value="DHPS"/>
    <property type="match status" value="1"/>
</dbReference>
<dbReference type="PANTHER" id="PTHR20941">
    <property type="entry name" value="FOLATE SYNTHESIS PROTEINS"/>
    <property type="match status" value="1"/>
</dbReference>
<dbReference type="PANTHER" id="PTHR20941:SF1">
    <property type="entry name" value="FOLIC ACID SYNTHESIS PROTEIN FOL1"/>
    <property type="match status" value="1"/>
</dbReference>
<dbReference type="Pfam" id="PF00809">
    <property type="entry name" value="Pterin_bind"/>
    <property type="match status" value="1"/>
</dbReference>
<dbReference type="SUPFAM" id="SSF51717">
    <property type="entry name" value="Dihydropteroate synthetase-like"/>
    <property type="match status" value="1"/>
</dbReference>
<dbReference type="PROSITE" id="PS00792">
    <property type="entry name" value="DHPS_1"/>
    <property type="match status" value="1"/>
</dbReference>
<dbReference type="PROSITE" id="PS00793">
    <property type="entry name" value="DHPS_2"/>
    <property type="match status" value="1"/>
</dbReference>
<dbReference type="PROSITE" id="PS50972">
    <property type="entry name" value="PTERIN_BINDING"/>
    <property type="match status" value="1"/>
</dbReference>
<keyword id="KW-0002">3D-structure</keyword>
<keyword id="KW-0289">Folate biosynthesis</keyword>
<keyword id="KW-0460">Magnesium</keyword>
<keyword id="KW-0479">Metal-binding</keyword>
<keyword id="KW-0808">Transferase</keyword>
<reference key="1">
    <citation type="journal article" date="2001" name="Lancet">
        <title>Whole genome sequencing of meticillin-resistant Staphylococcus aureus.</title>
        <authorList>
            <person name="Kuroda M."/>
            <person name="Ohta T."/>
            <person name="Uchiyama I."/>
            <person name="Baba T."/>
            <person name="Yuzawa H."/>
            <person name="Kobayashi I."/>
            <person name="Cui L."/>
            <person name="Oguchi A."/>
            <person name="Aoki K."/>
            <person name="Nagai Y."/>
            <person name="Lian J.-Q."/>
            <person name="Ito T."/>
            <person name="Kanamori M."/>
            <person name="Matsumaru H."/>
            <person name="Maruyama A."/>
            <person name="Murakami H."/>
            <person name="Hosoyama A."/>
            <person name="Mizutani-Ui Y."/>
            <person name="Takahashi N.K."/>
            <person name="Sawano T."/>
            <person name="Inoue R."/>
            <person name="Kaito C."/>
            <person name="Sekimizu K."/>
            <person name="Hirakawa H."/>
            <person name="Kuhara S."/>
            <person name="Goto S."/>
            <person name="Yabuzaki J."/>
            <person name="Kanehisa M."/>
            <person name="Yamashita A."/>
            <person name="Oshima K."/>
            <person name="Furuya K."/>
            <person name="Yoshino C."/>
            <person name="Shiba T."/>
            <person name="Hattori M."/>
            <person name="Ogasawara N."/>
            <person name="Hayashi H."/>
            <person name="Hiramatsu K."/>
        </authorList>
    </citation>
    <scope>NUCLEOTIDE SEQUENCE [LARGE SCALE GENOMIC DNA]</scope>
    <source>
        <strain>Mu50 / ATCC 700699</strain>
    </source>
</reference>
<organism>
    <name type="scientific">Staphylococcus aureus (strain Mu50 / ATCC 700699)</name>
    <dbReference type="NCBI Taxonomy" id="158878"/>
    <lineage>
        <taxon>Bacteria</taxon>
        <taxon>Bacillati</taxon>
        <taxon>Bacillota</taxon>
        <taxon>Bacilli</taxon>
        <taxon>Bacillales</taxon>
        <taxon>Staphylococcaceae</taxon>
        <taxon>Staphylococcus</taxon>
    </lineage>
</organism>
<comment type="function">
    <text evidence="2">Catalyzes the condensation of para-aminobenzoate (pABA) with 6-hydroxymethyl-7,8-dihydropterin diphosphate (DHPt-PP) to form 7,8-dihydropteroate (H2Pte), the immediate precursor of folate derivatives.</text>
</comment>
<comment type="catalytic activity">
    <reaction evidence="2">
        <text>(7,8-dihydropterin-6-yl)methyl diphosphate + 4-aminobenzoate = 7,8-dihydropteroate + diphosphate</text>
        <dbReference type="Rhea" id="RHEA:19949"/>
        <dbReference type="ChEBI" id="CHEBI:17836"/>
        <dbReference type="ChEBI" id="CHEBI:17839"/>
        <dbReference type="ChEBI" id="CHEBI:33019"/>
        <dbReference type="ChEBI" id="CHEBI:72950"/>
        <dbReference type="EC" id="2.5.1.15"/>
    </reaction>
</comment>
<comment type="cofactor">
    <cofactor evidence="2">
        <name>Mg(2+)</name>
        <dbReference type="ChEBI" id="CHEBI:18420"/>
    </cofactor>
</comment>
<comment type="pathway">
    <text>Cofactor biosynthesis; tetrahydrofolate biosynthesis; 7,8-dihydrofolate from 2-amino-4-hydroxy-6-hydroxymethyl-7,8-dihydropteridine diphosphate and 4-aminobenzoate: step 1/2.</text>
</comment>
<comment type="subunit">
    <text evidence="1">Homodimer.</text>
</comment>
<comment type="similarity">
    <text evidence="5">Belongs to the DHPS family.</text>
</comment>
<proteinExistence type="evidence at protein level"/>
<sequence length="267" mass="29533">MTKTKIMGILNVTPDSFSDGGKFNNVETAINRVKAMIDEGADIIDVGGVSTRPGHEMVTLEEELNRVLPVVEAIVGFDVKISVDTFRSEVAEACLKLGVDMINDQWAGLYDHRMFQIVAKYDAEIILMHNGNGNRDEPVVEEMLTSLLAQAHQAKIAGIPSNKIWLDPGIGFAKTRNEEAEVMARLDELVATEYPVLLATSRKRFTKEMMGYDTTPVERDEVTAATTAYGIMKGVRAVRVHNVELNAKLAKGIDFLKENENARHNLS</sequence>
<protein>
    <recommendedName>
        <fullName>Dihydropteroate synthase</fullName>
        <shortName>DHPS</shortName>
        <ecNumber>2.5.1.15</ecNumber>
    </recommendedName>
    <alternativeName>
        <fullName>Dihydropteroate pyrophosphorylase</fullName>
    </alternativeName>
</protein>
<accession>P64141</accession>
<accession>Q99W89</accession>
<feature type="chain" id="PRO_0000168221" description="Dihydropteroate synthase">
    <location>
        <begin position="1"/>
        <end position="267"/>
    </location>
</feature>
<feature type="domain" description="Pterin-binding" evidence="4">
    <location>
        <begin position="1"/>
        <end position="251"/>
    </location>
</feature>
<feature type="binding site" evidence="3">
    <location>
        <position position="11"/>
    </location>
    <ligand>
        <name>Mg(2+)</name>
        <dbReference type="ChEBI" id="CHEBI:18420"/>
    </ligand>
</feature>
<feature type="binding site" evidence="2">
    <location>
        <position position="51"/>
    </location>
    <ligand>
        <name>(7,8-dihydropterin-6-yl)methyl diphosphate</name>
        <dbReference type="ChEBI" id="CHEBI:72950"/>
    </ligand>
</feature>
<feature type="binding site" evidence="2">
    <location>
        <position position="84"/>
    </location>
    <ligand>
        <name>(7,8-dihydropterin-6-yl)methyl diphosphate</name>
        <dbReference type="ChEBI" id="CHEBI:72950"/>
    </ligand>
</feature>
<feature type="binding site" evidence="2">
    <location>
        <position position="103"/>
    </location>
    <ligand>
        <name>(7,8-dihydropterin-6-yl)methyl diphosphate</name>
        <dbReference type="ChEBI" id="CHEBI:72950"/>
    </ligand>
</feature>
<feature type="binding site" evidence="2">
    <location>
        <position position="167"/>
    </location>
    <ligand>
        <name>(7,8-dihydropterin-6-yl)methyl diphosphate</name>
        <dbReference type="ChEBI" id="CHEBI:72950"/>
    </ligand>
</feature>
<feature type="binding site" evidence="2">
    <location>
        <position position="203"/>
    </location>
    <ligand>
        <name>(7,8-dihydropterin-6-yl)methyl diphosphate</name>
        <dbReference type="ChEBI" id="CHEBI:72950"/>
    </ligand>
</feature>
<feature type="binding site" evidence="2">
    <location>
        <begin position="239"/>
        <end position="241"/>
    </location>
    <ligand>
        <name>(7,8-dihydropterin-6-yl)methyl diphosphate</name>
        <dbReference type="ChEBI" id="CHEBI:72950"/>
    </ligand>
</feature>
<feature type="strand" evidence="6">
    <location>
        <begin position="5"/>
        <end position="11"/>
    </location>
</feature>
<feature type="helix" evidence="6">
    <location>
        <begin position="25"/>
        <end position="38"/>
    </location>
</feature>
<feature type="strand" evidence="6">
    <location>
        <begin position="42"/>
        <end position="48"/>
    </location>
</feature>
<feature type="helix" evidence="6">
    <location>
        <begin position="60"/>
        <end position="74"/>
    </location>
</feature>
<feature type="strand" evidence="6">
    <location>
        <begin position="77"/>
        <end position="84"/>
    </location>
</feature>
<feature type="helix" evidence="6">
    <location>
        <begin position="88"/>
        <end position="97"/>
    </location>
</feature>
<feature type="strand" evidence="6">
    <location>
        <begin position="101"/>
        <end position="104"/>
    </location>
</feature>
<feature type="turn" evidence="6">
    <location>
        <begin position="105"/>
        <end position="108"/>
    </location>
</feature>
<feature type="helix" evidence="6">
    <location>
        <begin position="114"/>
        <end position="120"/>
    </location>
</feature>
<feature type="strand" evidence="6">
    <location>
        <begin position="124"/>
        <end position="128"/>
    </location>
</feature>
<feature type="helix" evidence="6">
    <location>
        <begin position="139"/>
        <end position="156"/>
    </location>
</feature>
<feature type="helix" evidence="6">
    <location>
        <begin position="161"/>
        <end position="163"/>
    </location>
</feature>
<feature type="strand" evidence="6">
    <location>
        <begin position="164"/>
        <end position="167"/>
    </location>
</feature>
<feature type="helix" evidence="6">
    <location>
        <begin position="176"/>
        <end position="183"/>
    </location>
</feature>
<feature type="helix" evidence="6">
    <location>
        <begin position="186"/>
        <end position="190"/>
    </location>
</feature>
<feature type="strand" evidence="6">
    <location>
        <begin position="196"/>
        <end position="198"/>
    </location>
</feature>
<feature type="helix" evidence="6">
    <location>
        <begin position="204"/>
        <end position="210"/>
    </location>
</feature>
<feature type="helix" evidence="6">
    <location>
        <begin position="217"/>
        <end position="219"/>
    </location>
</feature>
<feature type="helix" evidence="6">
    <location>
        <begin position="220"/>
        <end position="233"/>
    </location>
</feature>
<feature type="strand" evidence="6">
    <location>
        <begin position="237"/>
        <end position="241"/>
    </location>
</feature>
<feature type="helix" evidence="6">
    <location>
        <begin position="243"/>
        <end position="262"/>
    </location>
</feature>
<evidence type="ECO:0000250" key="1"/>
<evidence type="ECO:0000250" key="2">
    <source>
        <dbReference type="UniProtKB" id="P0AC13"/>
    </source>
</evidence>
<evidence type="ECO:0000250" key="3">
    <source>
        <dbReference type="UniProtKB" id="P9WND1"/>
    </source>
</evidence>
<evidence type="ECO:0000255" key="4">
    <source>
        <dbReference type="PROSITE-ProRule" id="PRU00334"/>
    </source>
</evidence>
<evidence type="ECO:0000305" key="5"/>
<evidence type="ECO:0007829" key="6">
    <source>
        <dbReference type="PDB" id="4HB7"/>
    </source>
</evidence>
<gene>
    <name type="primary">folP</name>
    <name type="ordered locus">SAV0514</name>
</gene>